<evidence type="ECO:0000255" key="1">
    <source>
        <dbReference type="HAMAP-Rule" id="MF_01338"/>
    </source>
</evidence>
<protein>
    <recommendedName>
        <fullName evidence="1">Ribulose bisphosphate carboxylase large chain</fullName>
        <shortName evidence="1">RuBisCO large subunit</shortName>
        <ecNumber evidence="1">4.1.1.39</ecNumber>
    </recommendedName>
</protein>
<sequence>KARVGFKAGVKDYRLTYYTPEYENKDTDILAAFRVTPQPGVPAEEAAAAVAAESSTGTWTTVWTDGLTSLDRYKGRCYHIEAVVGEENQYIAYVAYPLDLFEEGSVTNMFTSIVGNVFGFXXXRALRLEDLRIPPAYSKTFQGPPHGIQVERDKLNKYGRPLLGCTIKPKLGLSAKNYGRAVYECLRGGLDFTKDDENVNSQPFMRWRDRFLFCAEALYKAQAETGEIKGHYLNATAGTCEEMIKRAVFARELGVPIVMHDYLTGGFTANTTLAHYCRDNGLLLHIHRAMHAVIDRQKNHGMHFRVLAKALRMSGGDHIHSGTVVGKLEGEREMTLGFVDLLRDDYIEKDRSRGIFFTQDWVSMPGVLPVASGGIHVWHMPALTEIFGDDSVLQFGGGTLGHPWGNAPGAVANRVALEACVQARNEGRDLASEGNEIIREACSW</sequence>
<dbReference type="EC" id="4.1.1.39" evidence="1"/>
<dbReference type="EMBL" id="Z77291">
    <property type="protein sequence ID" value="CAB01090.1"/>
    <property type="molecule type" value="Genomic_DNA"/>
</dbReference>
<dbReference type="GO" id="GO:0009507">
    <property type="term" value="C:chloroplast"/>
    <property type="evidence" value="ECO:0007669"/>
    <property type="project" value="UniProtKB-SubCell"/>
</dbReference>
<dbReference type="GO" id="GO:0000287">
    <property type="term" value="F:magnesium ion binding"/>
    <property type="evidence" value="ECO:0007669"/>
    <property type="project" value="InterPro"/>
</dbReference>
<dbReference type="GO" id="GO:0004497">
    <property type="term" value="F:monooxygenase activity"/>
    <property type="evidence" value="ECO:0007669"/>
    <property type="project" value="UniProtKB-KW"/>
</dbReference>
<dbReference type="GO" id="GO:0016984">
    <property type="term" value="F:ribulose-bisphosphate carboxylase activity"/>
    <property type="evidence" value="ECO:0007669"/>
    <property type="project" value="UniProtKB-EC"/>
</dbReference>
<dbReference type="GO" id="GO:0009853">
    <property type="term" value="P:photorespiration"/>
    <property type="evidence" value="ECO:0007669"/>
    <property type="project" value="UniProtKB-KW"/>
</dbReference>
<dbReference type="GO" id="GO:0019253">
    <property type="term" value="P:reductive pentose-phosphate cycle"/>
    <property type="evidence" value="ECO:0007669"/>
    <property type="project" value="UniProtKB-KW"/>
</dbReference>
<dbReference type="CDD" id="cd08212">
    <property type="entry name" value="RuBisCO_large_I"/>
    <property type="match status" value="1"/>
</dbReference>
<dbReference type="FunFam" id="3.20.20.110:FF:000003">
    <property type="entry name" value="Ribulose bisphosphate carboxylase large chain"/>
    <property type="match status" value="1"/>
</dbReference>
<dbReference type="FunFam" id="3.30.70.150:FF:000001">
    <property type="entry name" value="Ribulose bisphosphate carboxylase large chain"/>
    <property type="match status" value="1"/>
</dbReference>
<dbReference type="Gene3D" id="3.20.20.110">
    <property type="entry name" value="Ribulose bisphosphate carboxylase, large subunit, C-terminal domain"/>
    <property type="match status" value="1"/>
</dbReference>
<dbReference type="Gene3D" id="3.30.70.150">
    <property type="entry name" value="RuBisCO large subunit, N-terminal domain"/>
    <property type="match status" value="1"/>
</dbReference>
<dbReference type="HAMAP" id="MF_01338">
    <property type="entry name" value="RuBisCO_L_type1"/>
    <property type="match status" value="1"/>
</dbReference>
<dbReference type="InterPro" id="IPR033966">
    <property type="entry name" value="RuBisCO"/>
</dbReference>
<dbReference type="InterPro" id="IPR020878">
    <property type="entry name" value="RuBisCo_large_chain_AS"/>
</dbReference>
<dbReference type="InterPro" id="IPR000685">
    <property type="entry name" value="RuBisCO_lsu_C"/>
</dbReference>
<dbReference type="InterPro" id="IPR036376">
    <property type="entry name" value="RuBisCO_lsu_C_sf"/>
</dbReference>
<dbReference type="InterPro" id="IPR017443">
    <property type="entry name" value="RuBisCO_lsu_fd_N"/>
</dbReference>
<dbReference type="InterPro" id="IPR036422">
    <property type="entry name" value="RuBisCO_lsu_N_sf"/>
</dbReference>
<dbReference type="InterPro" id="IPR020888">
    <property type="entry name" value="RuBisCO_lsuI"/>
</dbReference>
<dbReference type="NCBIfam" id="NF003252">
    <property type="entry name" value="PRK04208.1"/>
    <property type="match status" value="1"/>
</dbReference>
<dbReference type="PANTHER" id="PTHR42704">
    <property type="entry name" value="RIBULOSE BISPHOSPHATE CARBOXYLASE"/>
    <property type="match status" value="1"/>
</dbReference>
<dbReference type="PANTHER" id="PTHR42704:SF15">
    <property type="entry name" value="RIBULOSE BISPHOSPHATE CARBOXYLASE LARGE CHAIN"/>
    <property type="match status" value="1"/>
</dbReference>
<dbReference type="Pfam" id="PF00016">
    <property type="entry name" value="RuBisCO_large"/>
    <property type="match status" value="1"/>
</dbReference>
<dbReference type="Pfam" id="PF02788">
    <property type="entry name" value="RuBisCO_large_N"/>
    <property type="match status" value="1"/>
</dbReference>
<dbReference type="SFLD" id="SFLDG01052">
    <property type="entry name" value="RuBisCO"/>
    <property type="match status" value="1"/>
</dbReference>
<dbReference type="SFLD" id="SFLDS00014">
    <property type="entry name" value="RuBisCO"/>
    <property type="match status" value="1"/>
</dbReference>
<dbReference type="SFLD" id="SFLDG00301">
    <property type="entry name" value="RuBisCO-like_proteins"/>
    <property type="match status" value="1"/>
</dbReference>
<dbReference type="SUPFAM" id="SSF51649">
    <property type="entry name" value="RuBisCo, C-terminal domain"/>
    <property type="match status" value="1"/>
</dbReference>
<dbReference type="SUPFAM" id="SSF54966">
    <property type="entry name" value="RuBisCO, large subunit, small (N-terminal) domain"/>
    <property type="match status" value="1"/>
</dbReference>
<dbReference type="PROSITE" id="PS00157">
    <property type="entry name" value="RUBISCO_LARGE"/>
    <property type="match status" value="1"/>
</dbReference>
<keyword id="KW-0113">Calvin cycle</keyword>
<keyword id="KW-0120">Carbon dioxide fixation</keyword>
<keyword id="KW-0150">Chloroplast</keyword>
<keyword id="KW-1015">Disulfide bond</keyword>
<keyword id="KW-0456">Lyase</keyword>
<keyword id="KW-0460">Magnesium</keyword>
<keyword id="KW-0479">Metal-binding</keyword>
<keyword id="KW-0488">Methylation</keyword>
<keyword id="KW-0503">Monooxygenase</keyword>
<keyword id="KW-0560">Oxidoreductase</keyword>
<keyword id="KW-0601">Photorespiration</keyword>
<keyword id="KW-0602">Photosynthesis</keyword>
<keyword id="KW-0934">Plastid</keyword>
<comment type="function">
    <text evidence="1">RuBisCO catalyzes two reactions: the carboxylation of D-ribulose 1,5-bisphosphate, the primary event in carbon dioxide fixation, as well as the oxidative fragmentation of the pentose substrate in the photorespiration process. Both reactions occur simultaneously and in competition at the same active site.</text>
</comment>
<comment type="catalytic activity">
    <reaction evidence="1">
        <text>2 (2R)-3-phosphoglycerate + 2 H(+) = D-ribulose 1,5-bisphosphate + CO2 + H2O</text>
        <dbReference type="Rhea" id="RHEA:23124"/>
        <dbReference type="ChEBI" id="CHEBI:15377"/>
        <dbReference type="ChEBI" id="CHEBI:15378"/>
        <dbReference type="ChEBI" id="CHEBI:16526"/>
        <dbReference type="ChEBI" id="CHEBI:57870"/>
        <dbReference type="ChEBI" id="CHEBI:58272"/>
        <dbReference type="EC" id="4.1.1.39"/>
    </reaction>
</comment>
<comment type="catalytic activity">
    <reaction evidence="1">
        <text>D-ribulose 1,5-bisphosphate + O2 = 2-phosphoglycolate + (2R)-3-phosphoglycerate + 2 H(+)</text>
        <dbReference type="Rhea" id="RHEA:36631"/>
        <dbReference type="ChEBI" id="CHEBI:15378"/>
        <dbReference type="ChEBI" id="CHEBI:15379"/>
        <dbReference type="ChEBI" id="CHEBI:57870"/>
        <dbReference type="ChEBI" id="CHEBI:58033"/>
        <dbReference type="ChEBI" id="CHEBI:58272"/>
    </reaction>
</comment>
<comment type="cofactor">
    <cofactor evidence="1">
        <name>Mg(2+)</name>
        <dbReference type="ChEBI" id="CHEBI:18420"/>
    </cofactor>
    <text evidence="1">Binds 1 Mg(2+) ion per subunit.</text>
</comment>
<comment type="subunit">
    <text evidence="1">Heterohexadecamer of 8 large chains and 8 small chains; disulfide-linked. The disulfide link is formed within the large subunit homodimers.</text>
</comment>
<comment type="subcellular location">
    <subcellularLocation>
        <location>Plastid</location>
        <location>Chloroplast</location>
    </subcellularLocation>
</comment>
<comment type="PTM">
    <text evidence="1">The disulfide bond which can form in the large chain dimeric partners within the hexadecamer appears to be associated with oxidative stress and protein turnover.</text>
</comment>
<comment type="miscellaneous">
    <text evidence="1">The basic functional RuBisCO is composed of a large chain homodimer in a 'head-to-tail' conformation. In form I RuBisCO this homodimer is arranged in a barrel-like tetramer with the small subunits forming a tetrameric 'cap' on each end of the 'barrel'.</text>
</comment>
<comment type="similarity">
    <text evidence="1">Belongs to the RuBisCO large chain family. Type I subfamily.</text>
</comment>
<organism>
    <name type="scientific">Watsonia angusta</name>
    <dbReference type="NCBI Taxonomy" id="58981"/>
    <lineage>
        <taxon>Eukaryota</taxon>
        <taxon>Viridiplantae</taxon>
        <taxon>Streptophyta</taxon>
        <taxon>Embryophyta</taxon>
        <taxon>Tracheophyta</taxon>
        <taxon>Spermatophyta</taxon>
        <taxon>Magnoliopsida</taxon>
        <taxon>Liliopsida</taxon>
        <taxon>Asparagales</taxon>
        <taxon>Iridaceae</taxon>
        <taxon>Crocoideae</taxon>
        <taxon>Watsonieae</taxon>
        <taxon>Watsonia</taxon>
    </lineage>
</organism>
<accession>P93936</accession>
<gene>
    <name evidence="1" type="primary">rbcL</name>
</gene>
<geneLocation type="chloroplast"/>
<reference key="1">
    <citation type="submission" date="1996-07" db="EMBL/GenBank/DDBJ databases">
        <authorList>
            <person name="Rudall P.J."/>
            <person name="Furness C.A."/>
            <person name="Fay M.F."/>
            <person name="Chase M.W."/>
        </authorList>
    </citation>
    <scope>NUCLEOTIDE SEQUENCE [GENOMIC DNA]</scope>
    <source>
        <tissue>Leaf</tissue>
    </source>
</reference>
<feature type="chain" id="PRO_0000062615" description="Ribulose bisphosphate carboxylase large chain">
    <location>
        <begin position="1" status="less than"/>
        <end position="444" status="greater than"/>
    </location>
</feature>
<feature type="active site" description="Proton acceptor" evidence="1">
    <location>
        <position position="168"/>
    </location>
</feature>
<feature type="active site" description="Proton acceptor" evidence="1">
    <location>
        <position position="287"/>
    </location>
</feature>
<feature type="binding site" description="in homodimeric partner" evidence="1">
    <location>
        <position position="116"/>
    </location>
    <ligand>
        <name>substrate</name>
    </ligand>
</feature>
<feature type="binding site" evidence="1">
    <location>
        <position position="166"/>
    </location>
    <ligand>
        <name>substrate</name>
    </ligand>
</feature>
<feature type="binding site" evidence="1">
    <location>
        <position position="170"/>
    </location>
    <ligand>
        <name>substrate</name>
    </ligand>
</feature>
<feature type="binding site" description="via carbamate group" evidence="1">
    <location>
        <position position="194"/>
    </location>
    <ligand>
        <name>Mg(2+)</name>
        <dbReference type="ChEBI" id="CHEBI:18420"/>
    </ligand>
</feature>
<feature type="binding site" evidence="1">
    <location>
        <position position="196"/>
    </location>
    <ligand>
        <name>Mg(2+)</name>
        <dbReference type="ChEBI" id="CHEBI:18420"/>
    </ligand>
</feature>
<feature type="binding site" evidence="1">
    <location>
        <position position="197"/>
    </location>
    <ligand>
        <name>Mg(2+)</name>
        <dbReference type="ChEBI" id="CHEBI:18420"/>
    </ligand>
</feature>
<feature type="binding site" evidence="1">
    <location>
        <position position="288"/>
    </location>
    <ligand>
        <name>substrate</name>
    </ligand>
</feature>
<feature type="binding site" evidence="1">
    <location>
        <position position="320"/>
    </location>
    <ligand>
        <name>substrate</name>
    </ligand>
</feature>
<feature type="binding site" evidence="1">
    <location>
        <position position="372"/>
    </location>
    <ligand>
        <name>substrate</name>
    </ligand>
</feature>
<feature type="site" description="Transition state stabilizer" evidence="1">
    <location>
        <position position="327"/>
    </location>
</feature>
<feature type="modified residue" description="N6,N6,N6-trimethyllysine" evidence="1">
    <location>
        <position position="7"/>
    </location>
</feature>
<feature type="modified residue" description="N6-carboxylysine" evidence="1">
    <location>
        <position position="194"/>
    </location>
</feature>
<feature type="disulfide bond" description="Interchain; in linked form" evidence="1">
    <location>
        <position position="240"/>
    </location>
</feature>
<feature type="non-terminal residue">
    <location>
        <position position="1"/>
    </location>
</feature>
<feature type="non-terminal residue">
    <location>
        <position position="444"/>
    </location>
</feature>
<proteinExistence type="inferred from homology"/>
<name>RBL_WATAN</name>